<comment type="function">
    <text evidence="1">Involved in the biosynthesis of the central metabolite phospho-alpha-D-ribosyl-1-pyrophosphate (PRPP) via the transfer of pyrophosphoryl group from ATP to 1-hydroxyl of ribose-5-phosphate (Rib-5-P).</text>
</comment>
<comment type="catalytic activity">
    <reaction evidence="1">
        <text>D-ribose 5-phosphate + ATP = 5-phospho-alpha-D-ribose 1-diphosphate + AMP + H(+)</text>
        <dbReference type="Rhea" id="RHEA:15609"/>
        <dbReference type="ChEBI" id="CHEBI:15378"/>
        <dbReference type="ChEBI" id="CHEBI:30616"/>
        <dbReference type="ChEBI" id="CHEBI:58017"/>
        <dbReference type="ChEBI" id="CHEBI:78346"/>
        <dbReference type="ChEBI" id="CHEBI:456215"/>
        <dbReference type="EC" id="2.7.6.1"/>
    </reaction>
</comment>
<comment type="cofactor">
    <cofactor evidence="1">
        <name>Mg(2+)</name>
        <dbReference type="ChEBI" id="CHEBI:18420"/>
    </cofactor>
    <text evidence="1">Binds 2 Mg(2+) ions per subunit.</text>
</comment>
<comment type="pathway">
    <text evidence="1">Metabolic intermediate biosynthesis; 5-phospho-alpha-D-ribose 1-diphosphate biosynthesis; 5-phospho-alpha-D-ribose 1-diphosphate from D-ribose 5-phosphate (route I): step 1/1.</text>
</comment>
<comment type="subunit">
    <text evidence="1">Homohexamer.</text>
</comment>
<comment type="subcellular location">
    <subcellularLocation>
        <location evidence="1">Cytoplasm</location>
    </subcellularLocation>
</comment>
<comment type="similarity">
    <text evidence="1">Belongs to the ribose-phosphate pyrophosphokinase family. Class I subfamily.</text>
</comment>
<proteinExistence type="inferred from homology"/>
<gene>
    <name evidence="1" type="primary">prs</name>
    <name type="ordered locus">OB0059</name>
</gene>
<keyword id="KW-0067">ATP-binding</keyword>
<keyword id="KW-0963">Cytoplasm</keyword>
<keyword id="KW-0418">Kinase</keyword>
<keyword id="KW-0460">Magnesium</keyword>
<keyword id="KW-0479">Metal-binding</keyword>
<keyword id="KW-0545">Nucleotide biosynthesis</keyword>
<keyword id="KW-0547">Nucleotide-binding</keyword>
<keyword id="KW-1185">Reference proteome</keyword>
<keyword id="KW-0808">Transferase</keyword>
<evidence type="ECO:0000255" key="1">
    <source>
        <dbReference type="HAMAP-Rule" id="MF_00583"/>
    </source>
</evidence>
<sequence>MTSSYKDSSLKVFSLNSNPELANEIATHIGTNLGKCTVSKFSDGEVQINLEESVRGCDVYVVQSTCAPVNQHIMELLIMIDALKRASAKSINIVMPYYGYARQDRKARSREPIAAKLVADLIEKAGANRVITLDLHAPQIQGFFDIPIDHLQGVPILSSYFEQKNLDDVIVVSPDHGGVTRARKMADRLKAPIGIIDKRRPKPNVAEIMNIIGNIEGKTAILIDDIIDTAGTITLAANALIENGAKEVYACCTHPVLSGPAIERIDNSKIKELVITDSIPLPDEKFSTKITALSVAPLIGEAIIRVHEMQSVSILFD</sequence>
<accession>Q8EU34</accession>
<name>KPRS_OCEIH</name>
<feature type="chain" id="PRO_0000141169" description="Ribose-phosphate pyrophosphokinase">
    <location>
        <begin position="1"/>
        <end position="317"/>
    </location>
</feature>
<feature type="active site" evidence="1">
    <location>
        <position position="198"/>
    </location>
</feature>
<feature type="binding site" evidence="1">
    <location>
        <begin position="43"/>
        <end position="45"/>
    </location>
    <ligand>
        <name>ATP</name>
        <dbReference type="ChEBI" id="CHEBI:30616"/>
    </ligand>
</feature>
<feature type="binding site" evidence="1">
    <location>
        <begin position="102"/>
        <end position="103"/>
    </location>
    <ligand>
        <name>ATP</name>
        <dbReference type="ChEBI" id="CHEBI:30616"/>
    </ligand>
</feature>
<feature type="binding site" evidence="1">
    <location>
        <position position="136"/>
    </location>
    <ligand>
        <name>Mg(2+)</name>
        <dbReference type="ChEBI" id="CHEBI:18420"/>
        <label>1</label>
    </ligand>
</feature>
<feature type="binding site" evidence="1">
    <location>
        <position position="175"/>
    </location>
    <ligand>
        <name>Mg(2+)</name>
        <dbReference type="ChEBI" id="CHEBI:18420"/>
        <label>2</label>
    </ligand>
</feature>
<feature type="binding site" evidence="1">
    <location>
        <position position="200"/>
    </location>
    <ligand>
        <name>D-ribose 5-phosphate</name>
        <dbReference type="ChEBI" id="CHEBI:78346"/>
    </ligand>
</feature>
<feature type="binding site" evidence="1">
    <location>
        <position position="224"/>
    </location>
    <ligand>
        <name>D-ribose 5-phosphate</name>
        <dbReference type="ChEBI" id="CHEBI:78346"/>
    </ligand>
</feature>
<feature type="binding site" evidence="1">
    <location>
        <begin position="228"/>
        <end position="232"/>
    </location>
    <ligand>
        <name>D-ribose 5-phosphate</name>
        <dbReference type="ChEBI" id="CHEBI:78346"/>
    </ligand>
</feature>
<protein>
    <recommendedName>
        <fullName evidence="1">Ribose-phosphate pyrophosphokinase</fullName>
        <shortName evidence="1">RPPK</shortName>
        <ecNumber evidence="1">2.7.6.1</ecNumber>
    </recommendedName>
    <alternativeName>
        <fullName evidence="1">5-phospho-D-ribosyl alpha-1-diphosphate synthase</fullName>
    </alternativeName>
    <alternativeName>
        <fullName evidence="1">Phosphoribosyl diphosphate synthase</fullName>
    </alternativeName>
    <alternativeName>
        <fullName evidence="1">Phosphoribosyl pyrophosphate synthase</fullName>
        <shortName evidence="1">P-Rib-PP synthase</shortName>
        <shortName evidence="1">PRPP synthase</shortName>
        <shortName evidence="1">PRPPase</shortName>
    </alternativeName>
</protein>
<organism>
    <name type="scientific">Oceanobacillus iheyensis (strain DSM 14371 / CIP 107618 / JCM 11309 / KCTC 3954 / HTE831)</name>
    <dbReference type="NCBI Taxonomy" id="221109"/>
    <lineage>
        <taxon>Bacteria</taxon>
        <taxon>Bacillati</taxon>
        <taxon>Bacillota</taxon>
        <taxon>Bacilli</taxon>
        <taxon>Bacillales</taxon>
        <taxon>Bacillaceae</taxon>
        <taxon>Oceanobacillus</taxon>
    </lineage>
</organism>
<dbReference type="EC" id="2.7.6.1" evidence="1"/>
<dbReference type="EMBL" id="BA000028">
    <property type="protein sequence ID" value="BAC12015.1"/>
    <property type="molecule type" value="Genomic_DNA"/>
</dbReference>
<dbReference type="RefSeq" id="WP_011064461.1">
    <property type="nucleotide sequence ID" value="NC_004193.1"/>
</dbReference>
<dbReference type="SMR" id="Q8EU34"/>
<dbReference type="STRING" id="221109.gene:10732221"/>
<dbReference type="KEGG" id="oih:OB0059"/>
<dbReference type="eggNOG" id="COG0462">
    <property type="taxonomic scope" value="Bacteria"/>
</dbReference>
<dbReference type="HOGENOM" id="CLU_033546_2_0_9"/>
<dbReference type="OrthoDB" id="9777067at2"/>
<dbReference type="PhylomeDB" id="Q8EU34"/>
<dbReference type="UniPathway" id="UPA00087">
    <property type="reaction ID" value="UER00172"/>
</dbReference>
<dbReference type="Proteomes" id="UP000000822">
    <property type="component" value="Chromosome"/>
</dbReference>
<dbReference type="GO" id="GO:0005737">
    <property type="term" value="C:cytoplasm"/>
    <property type="evidence" value="ECO:0007669"/>
    <property type="project" value="UniProtKB-SubCell"/>
</dbReference>
<dbReference type="GO" id="GO:0002189">
    <property type="term" value="C:ribose phosphate diphosphokinase complex"/>
    <property type="evidence" value="ECO:0007669"/>
    <property type="project" value="TreeGrafter"/>
</dbReference>
<dbReference type="GO" id="GO:0005524">
    <property type="term" value="F:ATP binding"/>
    <property type="evidence" value="ECO:0007669"/>
    <property type="project" value="UniProtKB-KW"/>
</dbReference>
<dbReference type="GO" id="GO:0016301">
    <property type="term" value="F:kinase activity"/>
    <property type="evidence" value="ECO:0007669"/>
    <property type="project" value="UniProtKB-KW"/>
</dbReference>
<dbReference type="GO" id="GO:0000287">
    <property type="term" value="F:magnesium ion binding"/>
    <property type="evidence" value="ECO:0007669"/>
    <property type="project" value="UniProtKB-UniRule"/>
</dbReference>
<dbReference type="GO" id="GO:0004749">
    <property type="term" value="F:ribose phosphate diphosphokinase activity"/>
    <property type="evidence" value="ECO:0007669"/>
    <property type="project" value="UniProtKB-UniRule"/>
</dbReference>
<dbReference type="GO" id="GO:0006015">
    <property type="term" value="P:5-phosphoribose 1-diphosphate biosynthetic process"/>
    <property type="evidence" value="ECO:0007669"/>
    <property type="project" value="UniProtKB-UniRule"/>
</dbReference>
<dbReference type="GO" id="GO:0006164">
    <property type="term" value="P:purine nucleotide biosynthetic process"/>
    <property type="evidence" value="ECO:0007669"/>
    <property type="project" value="TreeGrafter"/>
</dbReference>
<dbReference type="GO" id="GO:0009156">
    <property type="term" value="P:ribonucleoside monophosphate biosynthetic process"/>
    <property type="evidence" value="ECO:0007669"/>
    <property type="project" value="InterPro"/>
</dbReference>
<dbReference type="CDD" id="cd06223">
    <property type="entry name" value="PRTases_typeI"/>
    <property type="match status" value="1"/>
</dbReference>
<dbReference type="FunFam" id="3.40.50.2020:FF:000001">
    <property type="entry name" value="Ribose-phosphate pyrophosphokinase"/>
    <property type="match status" value="1"/>
</dbReference>
<dbReference type="FunFam" id="3.40.50.2020:FF:000005">
    <property type="entry name" value="Ribose-phosphate pyrophosphokinase 1"/>
    <property type="match status" value="1"/>
</dbReference>
<dbReference type="Gene3D" id="3.40.50.2020">
    <property type="match status" value="2"/>
</dbReference>
<dbReference type="HAMAP" id="MF_00583_B">
    <property type="entry name" value="RibP_PPkinase_B"/>
    <property type="match status" value="1"/>
</dbReference>
<dbReference type="InterPro" id="IPR000842">
    <property type="entry name" value="PRib_PP_synth_CS"/>
</dbReference>
<dbReference type="InterPro" id="IPR029099">
    <property type="entry name" value="Pribosyltran_N"/>
</dbReference>
<dbReference type="InterPro" id="IPR000836">
    <property type="entry name" value="PRibTrfase_dom"/>
</dbReference>
<dbReference type="InterPro" id="IPR029057">
    <property type="entry name" value="PRTase-like"/>
</dbReference>
<dbReference type="InterPro" id="IPR005946">
    <property type="entry name" value="Rib-P_diPkinase"/>
</dbReference>
<dbReference type="InterPro" id="IPR037515">
    <property type="entry name" value="Rib-P_diPkinase_bac"/>
</dbReference>
<dbReference type="NCBIfam" id="NF002320">
    <property type="entry name" value="PRK01259.1"/>
    <property type="match status" value="1"/>
</dbReference>
<dbReference type="NCBIfam" id="NF002618">
    <property type="entry name" value="PRK02269.1"/>
    <property type="match status" value="1"/>
</dbReference>
<dbReference type="NCBIfam" id="TIGR01251">
    <property type="entry name" value="ribP_PPkin"/>
    <property type="match status" value="1"/>
</dbReference>
<dbReference type="PANTHER" id="PTHR10210">
    <property type="entry name" value="RIBOSE-PHOSPHATE DIPHOSPHOKINASE FAMILY MEMBER"/>
    <property type="match status" value="1"/>
</dbReference>
<dbReference type="PANTHER" id="PTHR10210:SF41">
    <property type="entry name" value="RIBOSE-PHOSPHATE PYROPHOSPHOKINASE 1, CHLOROPLASTIC"/>
    <property type="match status" value="1"/>
</dbReference>
<dbReference type="Pfam" id="PF14572">
    <property type="entry name" value="Pribosyl_synth"/>
    <property type="match status" value="1"/>
</dbReference>
<dbReference type="Pfam" id="PF13793">
    <property type="entry name" value="Pribosyltran_N"/>
    <property type="match status" value="1"/>
</dbReference>
<dbReference type="SMART" id="SM01400">
    <property type="entry name" value="Pribosyltran_N"/>
    <property type="match status" value="1"/>
</dbReference>
<dbReference type="SUPFAM" id="SSF53271">
    <property type="entry name" value="PRTase-like"/>
    <property type="match status" value="1"/>
</dbReference>
<dbReference type="PROSITE" id="PS00114">
    <property type="entry name" value="PRPP_SYNTHASE"/>
    <property type="match status" value="1"/>
</dbReference>
<reference key="1">
    <citation type="journal article" date="2002" name="Nucleic Acids Res.">
        <title>Genome sequence of Oceanobacillus iheyensis isolated from the Iheya Ridge and its unexpected adaptive capabilities to extreme environments.</title>
        <authorList>
            <person name="Takami H."/>
            <person name="Takaki Y."/>
            <person name="Uchiyama I."/>
        </authorList>
    </citation>
    <scope>NUCLEOTIDE SEQUENCE [LARGE SCALE GENOMIC DNA]</scope>
    <source>
        <strain>DSM 14371 / CIP 107618 / JCM 11309 / KCTC 3954 / HTE831</strain>
    </source>
</reference>